<keyword id="KW-0002">3D-structure</keyword>
<keyword id="KW-0903">Direct protein sequencing</keyword>
<keyword id="KW-0426">Late protein</keyword>
<keyword id="KW-1185">Reference proteome</keyword>
<keyword id="KW-1242">Viral contractile tail ejection system</keyword>
<keyword id="KW-1171">Viral genome ejection through host cell envelope</keyword>
<keyword id="KW-1162">Viral penetration into host cytoplasm</keyword>
<keyword id="KW-1227">Viral tail protein</keyword>
<keyword id="KW-1228">Viral tail tube protein</keyword>
<keyword id="KW-0946">Virion</keyword>
<keyword id="KW-1160">Virus entry into host cell</keyword>
<reference key="1">
    <citation type="journal article" date="1988" name="J. Virol.">
        <title>Nucleotide sequence of the tail tube structural gene of bacteriophage T4.</title>
        <authorList>
            <person name="Arisaka F."/>
            <person name="Ishimoto L."/>
            <person name="Kassavetis G."/>
            <person name="Kumazaki T."/>
            <person name="Ishii S."/>
        </authorList>
    </citation>
    <scope>NUCLEOTIDE SEQUENCE [GENOMIC DNA]</scope>
    <scope>PARTIAL PROTEIN SEQUENCE</scope>
</reference>
<reference key="2">
    <citation type="journal article" date="2003" name="Microbiol. Mol. Biol. Rev.">
        <title>Bacteriophage T4 genome.</title>
        <authorList>
            <person name="Miller E.S."/>
            <person name="Kutter E."/>
            <person name="Mosig G."/>
            <person name="Arisaka F."/>
            <person name="Kunisawa T."/>
            <person name="Ruger W."/>
        </authorList>
    </citation>
    <scope>NUCLEOTIDE SEQUENCE [LARGE SCALE GENOMIC DNA]</scope>
</reference>
<reference key="3">
    <citation type="journal article" date="2003" name="Cell. Mol. Life Sci.">
        <title>Structure and morphogenesis of bacteriophage T4.</title>
        <authorList>
            <person name="Leiman P.G."/>
            <person name="Kanamaru S."/>
            <person name="Mesyanzhinov V.V."/>
            <person name="Arisaka F."/>
            <person name="Rossmann M.G."/>
        </authorList>
    </citation>
    <scope>FUNCTION</scope>
</reference>
<reference key="4">
    <citation type="journal article" date="2004" name="Cell">
        <title>Three-dimensional rearrangement of proteins in the tail of bacteriophage T4 on infection of its host.</title>
        <authorList>
            <person name="Leiman P.G."/>
            <person name="Chipman P.R."/>
            <person name="Kostyuchenko V.A."/>
            <person name="Mesyanzhinov V.V."/>
            <person name="Rossmann M.G."/>
        </authorList>
    </citation>
    <scope>SUBCELLULAR LOCATION AND SUBUNIT</scope>
</reference>
<reference key="5">
    <citation type="journal article" date="2016" name="Nature">
        <title>Structure of the T4 baseplate and its function in triggering sheath contraction.</title>
        <authorList>
            <person name="Taylor N.M."/>
            <person name="Prokhorov N.S."/>
            <person name="Guerrero-Ferreira R.C."/>
            <person name="Shneider M.M."/>
            <person name="Browning C."/>
            <person name="Goldie K.N."/>
            <person name="Stahlberg H."/>
            <person name="Leiman P.G."/>
        </authorList>
    </citation>
    <scope>STRUCTURE BY ELECTRON MICROSCOPY (4.11 ANGSTROMS)</scope>
    <scope>SUBUNIT</scope>
    <scope>SUBCELLULAR LOCATION</scope>
    <scope>FUNCTION</scope>
</reference>
<protein>
    <recommendedName>
        <fullName evidence="4">Tail tube protein gp19</fullName>
    </recommendedName>
    <alternativeName>
        <fullName evidence="4">Gene product 19</fullName>
        <shortName>gp19</shortName>
    </alternativeName>
</protein>
<name>TUBE_BPT4</name>
<evidence type="ECO:0000269" key="1">
    <source>
    </source>
</evidence>
<evidence type="ECO:0000269" key="2">
    <source>
    </source>
</evidence>
<evidence type="ECO:0000269" key="3">
    <source>
    </source>
</evidence>
<evidence type="ECO:0000305" key="4"/>
<evidence type="ECO:0007829" key="5">
    <source>
        <dbReference type="PDB" id="5W5F"/>
    </source>
</evidence>
<proteinExistence type="evidence at protein level"/>
<dbReference type="EMBL" id="M19085">
    <property type="protein sequence ID" value="AAA32542.1"/>
    <property type="molecule type" value="Genomic_DNA"/>
</dbReference>
<dbReference type="EMBL" id="AF158101">
    <property type="protein sequence ID" value="AAD42424.1"/>
    <property type="molecule type" value="Genomic_DNA"/>
</dbReference>
<dbReference type="PIR" id="JF0022">
    <property type="entry name" value="JF0022"/>
</dbReference>
<dbReference type="RefSeq" id="NP_049781.1">
    <property type="nucleotide sequence ID" value="NC_000866.4"/>
</dbReference>
<dbReference type="PDB" id="5IV5">
    <property type="method" value="EM"/>
    <property type="resolution" value="4.11 A"/>
    <property type="chains" value="BB/BC/DE/DF/FH/FI/IA/IB/R/S/o/p=1-163"/>
</dbReference>
<dbReference type="PDB" id="5W5F">
    <property type="method" value="EM"/>
    <property type="resolution" value="3.40 A"/>
    <property type="chains" value="A/B/C/D/E/F/G/H/I/J/K/L/M/N/O/P/Q/R=1-163"/>
</dbReference>
<dbReference type="PDBsum" id="5IV5"/>
<dbReference type="PDBsum" id="5W5F"/>
<dbReference type="EMDB" id="EMD-8767"/>
<dbReference type="SMR" id="P13333"/>
<dbReference type="TCDB" id="1.K.1.1.1">
    <property type="family name" value="the gp27/5 t4-baseplate (t4-bp) family"/>
</dbReference>
<dbReference type="GeneID" id="1258727"/>
<dbReference type="KEGG" id="vg:1258727"/>
<dbReference type="OrthoDB" id="10275at10239"/>
<dbReference type="Proteomes" id="UP000009087">
    <property type="component" value="Segment"/>
</dbReference>
<dbReference type="GO" id="GO:0098026">
    <property type="term" value="C:virus tail, tube"/>
    <property type="evidence" value="ECO:0000314"/>
    <property type="project" value="UniProtKB"/>
</dbReference>
<dbReference type="GO" id="GO:0005198">
    <property type="term" value="F:structural molecule activity"/>
    <property type="evidence" value="ECO:0007669"/>
    <property type="project" value="InterPro"/>
</dbReference>
<dbReference type="GO" id="GO:0099000">
    <property type="term" value="P:symbiont genome ejection through host cell envelope, contractile tail mechanism"/>
    <property type="evidence" value="ECO:0007669"/>
    <property type="project" value="UniProtKB-KW"/>
</dbReference>
<dbReference type="InterPro" id="IPR010667">
    <property type="entry name" value="Phage_T4_Gp19"/>
</dbReference>
<dbReference type="Pfam" id="PF06841">
    <property type="entry name" value="Phage_T4_gp19"/>
    <property type="match status" value="1"/>
</dbReference>
<comment type="function">
    <text evidence="1 3">Forms the central cylindrical rigid tube, which is surrounded by the outer contractile sheath assembled from gp18 subunits. The tail tube first 2 annuli are formed by gp48 and gp54, which are in continuation of the spike complex. During infection, contraction of the sheath drives the central tube through the host outer membrane, creating a channel for DNA ejection from the capsid into the host cell.</text>
</comment>
<comment type="subunit">
    <text evidence="3">Homohexamer. The tube is composed of gp19 hexameric rings. Interacts with gp54.</text>
</comment>
<comment type="subcellular location">
    <subcellularLocation>
        <location evidence="2 3">Virion</location>
    </subcellularLocation>
</comment>
<comment type="similarity">
    <text evidence="4">Belongs to the T4-like viruses Gp19 protein family.</text>
</comment>
<sequence length="163" mass="18462">MFVDDVTRAFESGDFARPNLFQVEISYLGQNFTFQCKATALPAGIVEKIPVGFMNRKINVAGDRTFDDWTVTVMNDEAHDARQKFVDWQSIAAGQGNEITGGKPAEYKKSAIVRQYARDAKTVTKEIEIKGLWPTNVGELQLDWDSNNEIQTFEVTLALDYWE</sequence>
<accession>P13333</accession>
<organismHost>
    <name type="scientific">Escherichia coli</name>
    <dbReference type="NCBI Taxonomy" id="562"/>
</organismHost>
<organism>
    <name type="scientific">Enterobacteria phage T4</name>
    <name type="common">Bacteriophage T4</name>
    <dbReference type="NCBI Taxonomy" id="10665"/>
    <lineage>
        <taxon>Viruses</taxon>
        <taxon>Duplodnaviria</taxon>
        <taxon>Heunggongvirae</taxon>
        <taxon>Uroviricota</taxon>
        <taxon>Caudoviricetes</taxon>
        <taxon>Straboviridae</taxon>
        <taxon>Tevenvirinae</taxon>
        <taxon>Tequatrovirus</taxon>
    </lineage>
</organism>
<gene>
    <name type="primary">19</name>
</gene>
<feature type="chain" id="PRO_0000165008" description="Tail tube protein gp19">
    <location>
        <begin position="1"/>
        <end position="163"/>
    </location>
</feature>
<feature type="helix" evidence="5">
    <location>
        <begin position="5"/>
        <end position="9"/>
    </location>
</feature>
<feature type="helix" evidence="5">
    <location>
        <begin position="11"/>
        <end position="13"/>
    </location>
</feature>
<feature type="strand" evidence="5">
    <location>
        <begin position="18"/>
        <end position="24"/>
    </location>
</feature>
<feature type="turn" evidence="5">
    <location>
        <begin position="26"/>
        <end position="28"/>
    </location>
</feature>
<feature type="helix" evidence="5">
    <location>
        <begin position="32"/>
        <end position="34"/>
    </location>
</feature>
<feature type="strand" evidence="5">
    <location>
        <begin position="36"/>
        <end position="41"/>
    </location>
</feature>
<feature type="strand" evidence="5">
    <location>
        <begin position="44"/>
        <end position="53"/>
    </location>
</feature>
<feature type="strand" evidence="5">
    <location>
        <begin position="56"/>
        <end position="66"/>
    </location>
</feature>
<feature type="strand" evidence="5">
    <location>
        <begin position="69"/>
        <end position="74"/>
    </location>
</feature>
<feature type="helix" evidence="5">
    <location>
        <begin position="80"/>
        <end position="92"/>
    </location>
</feature>
<feature type="strand" evidence="5">
    <location>
        <begin position="96"/>
        <end position="98"/>
    </location>
</feature>
<feature type="helix" evidence="5">
    <location>
        <begin position="104"/>
        <end position="107"/>
    </location>
</feature>
<feature type="strand" evidence="5">
    <location>
        <begin position="109"/>
        <end position="116"/>
    </location>
</feature>
<feature type="strand" evidence="5">
    <location>
        <begin position="123"/>
        <end position="138"/>
    </location>
</feature>
<feature type="strand" evidence="5">
    <location>
        <begin position="140"/>
        <end position="145"/>
    </location>
</feature>
<feature type="strand" evidence="5">
    <location>
        <begin position="152"/>
        <end position="158"/>
    </location>
</feature>
<feature type="strand" evidence="5">
    <location>
        <begin position="160"/>
        <end position="163"/>
    </location>
</feature>